<dbReference type="EMBL" id="CP001615">
    <property type="protein sequence ID" value="ACQ69824.1"/>
    <property type="molecule type" value="Genomic_DNA"/>
</dbReference>
<dbReference type="RefSeq" id="WP_012726943.1">
    <property type="nucleotide sequence ID" value="NC_012673.1"/>
</dbReference>
<dbReference type="SMR" id="C4L5K9"/>
<dbReference type="STRING" id="360911.EAT1b_0895"/>
<dbReference type="KEGG" id="eat:EAT1b_0895"/>
<dbReference type="eggNOG" id="COG1186">
    <property type="taxonomic scope" value="Bacteria"/>
</dbReference>
<dbReference type="HOGENOM" id="CLU_036856_6_0_9"/>
<dbReference type="OrthoDB" id="9806673at2"/>
<dbReference type="Proteomes" id="UP000000716">
    <property type="component" value="Chromosome"/>
</dbReference>
<dbReference type="GO" id="GO:0005737">
    <property type="term" value="C:cytoplasm"/>
    <property type="evidence" value="ECO:0007669"/>
    <property type="project" value="UniProtKB-SubCell"/>
</dbReference>
<dbReference type="GO" id="GO:0016149">
    <property type="term" value="F:translation release factor activity, codon specific"/>
    <property type="evidence" value="ECO:0007669"/>
    <property type="project" value="UniProtKB-UniRule"/>
</dbReference>
<dbReference type="FunFam" id="3.30.160.20:FF:000010">
    <property type="entry name" value="Peptide chain release factor 2"/>
    <property type="match status" value="1"/>
</dbReference>
<dbReference type="Gene3D" id="3.30.160.20">
    <property type="match status" value="1"/>
</dbReference>
<dbReference type="Gene3D" id="3.30.70.1660">
    <property type="match status" value="1"/>
</dbReference>
<dbReference type="Gene3D" id="1.20.58.410">
    <property type="entry name" value="Release factor"/>
    <property type="match status" value="1"/>
</dbReference>
<dbReference type="HAMAP" id="MF_00094">
    <property type="entry name" value="Rel_fac_2"/>
    <property type="match status" value="1"/>
</dbReference>
<dbReference type="InterPro" id="IPR005139">
    <property type="entry name" value="PCRF"/>
</dbReference>
<dbReference type="InterPro" id="IPR000352">
    <property type="entry name" value="Pep_chain_release_fac_I"/>
</dbReference>
<dbReference type="InterPro" id="IPR045853">
    <property type="entry name" value="Pep_chain_release_fac_I_sf"/>
</dbReference>
<dbReference type="InterPro" id="IPR004374">
    <property type="entry name" value="PrfB"/>
</dbReference>
<dbReference type="NCBIfam" id="TIGR00020">
    <property type="entry name" value="prfB"/>
    <property type="match status" value="1"/>
</dbReference>
<dbReference type="PANTHER" id="PTHR43116:SF3">
    <property type="entry name" value="CLASS I PEPTIDE CHAIN RELEASE FACTOR"/>
    <property type="match status" value="1"/>
</dbReference>
<dbReference type="PANTHER" id="PTHR43116">
    <property type="entry name" value="PEPTIDE CHAIN RELEASE FACTOR 2"/>
    <property type="match status" value="1"/>
</dbReference>
<dbReference type="Pfam" id="PF03462">
    <property type="entry name" value="PCRF"/>
    <property type="match status" value="1"/>
</dbReference>
<dbReference type="Pfam" id="PF00472">
    <property type="entry name" value="RF-1"/>
    <property type="match status" value="1"/>
</dbReference>
<dbReference type="SMART" id="SM00937">
    <property type="entry name" value="PCRF"/>
    <property type="match status" value="1"/>
</dbReference>
<dbReference type="SUPFAM" id="SSF75620">
    <property type="entry name" value="Release factor"/>
    <property type="match status" value="1"/>
</dbReference>
<dbReference type="PROSITE" id="PS00745">
    <property type="entry name" value="RF_PROK_I"/>
    <property type="match status" value="1"/>
</dbReference>
<feature type="chain" id="PRO_1000202710" description="Peptide chain release factor 2">
    <location>
        <begin position="1"/>
        <end position="366"/>
    </location>
</feature>
<feature type="modified residue" description="N5-methylglutamine" evidence="1">
    <location>
        <position position="251"/>
    </location>
</feature>
<protein>
    <recommendedName>
        <fullName evidence="1">Peptide chain release factor 2</fullName>
        <shortName evidence="1">RF-2</shortName>
    </recommendedName>
</protein>
<keyword id="KW-0963">Cytoplasm</keyword>
<keyword id="KW-0488">Methylation</keyword>
<keyword id="KW-0648">Protein biosynthesis</keyword>
<name>RF2_EXISA</name>
<sequence length="366" mass="41860">MEISDIRNELEAMAKRLENYRASLNLTEKEARIAELENEMTYPDFWDNQEKAQKVIDESNGLKAMVDKYQDLANQHEDGEVTLELIKEEPDAEMQEELGESIQALKKEFDDFELEILLNGPYDANNAILELHPGAGGTESQDWASMLLRMYQRFADKQGWKVETVDYLPGEEAGVKSVTLRIVGHNAYGYLKAEKGIHRLVRISPFDSSGRRHTSFVSCDVMPEFDDDIEIEVRTEDLRIDTYRASGAGGQHINTTDSAVRITHVPTGVVVSCQTERSQIKNRESAMKMLKAKLYQRELDEQQRKLDEIRGEKTDIGWGSQIRSYVFHPYSMVKDHRTNYEVGNTSGVMDGDVMPFIDAYLRKTNM</sequence>
<organism>
    <name type="scientific">Exiguobacterium sp. (strain ATCC BAA-1283 / AT1b)</name>
    <dbReference type="NCBI Taxonomy" id="360911"/>
    <lineage>
        <taxon>Bacteria</taxon>
        <taxon>Bacillati</taxon>
        <taxon>Bacillota</taxon>
        <taxon>Bacilli</taxon>
        <taxon>Bacillales</taxon>
        <taxon>Bacillales Family XII. Incertae Sedis</taxon>
        <taxon>Exiguobacterium</taxon>
    </lineage>
</organism>
<evidence type="ECO:0000255" key="1">
    <source>
        <dbReference type="HAMAP-Rule" id="MF_00094"/>
    </source>
</evidence>
<proteinExistence type="inferred from homology"/>
<comment type="function">
    <text evidence="1">Peptide chain release factor 2 directs the termination of translation in response to the peptide chain termination codons UGA and UAA.</text>
</comment>
<comment type="subcellular location">
    <subcellularLocation>
        <location evidence="1">Cytoplasm</location>
    </subcellularLocation>
</comment>
<comment type="PTM">
    <text evidence="1">Methylated by PrmC. Methylation increases the termination efficiency of RF2.</text>
</comment>
<comment type="similarity">
    <text evidence="1">Belongs to the prokaryotic/mitochondrial release factor family.</text>
</comment>
<gene>
    <name evidence="1" type="primary">prfB</name>
    <name type="ordered locus">EAT1b_0895</name>
</gene>
<accession>C4L5K9</accession>
<reference key="1">
    <citation type="journal article" date="2011" name="J. Bacteriol.">
        <title>Complete genome sequence of the Thermophilic Bacterium Exiguobacterium sp. AT1b.</title>
        <authorList>
            <person name="Vishnivetskaya T.A."/>
            <person name="Lucas S."/>
            <person name="Copeland A."/>
            <person name="Lapidus A."/>
            <person name="Glavina del Rio T."/>
            <person name="Dalin E."/>
            <person name="Tice H."/>
            <person name="Bruce D.C."/>
            <person name="Goodwin L.A."/>
            <person name="Pitluck S."/>
            <person name="Saunders E."/>
            <person name="Brettin T."/>
            <person name="Detter C."/>
            <person name="Han C."/>
            <person name="Larimer F."/>
            <person name="Land M.L."/>
            <person name="Hauser L.J."/>
            <person name="Kyrpides N.C."/>
            <person name="Ovchinnikova G."/>
            <person name="Kathariou S."/>
            <person name="Ramaley R.F."/>
            <person name="Rodrigues D.F."/>
            <person name="Hendrix C."/>
            <person name="Richardson P."/>
            <person name="Tiedje J.M."/>
        </authorList>
    </citation>
    <scope>NUCLEOTIDE SEQUENCE [LARGE SCALE GENOMIC DNA]</scope>
    <source>
        <strain>ATCC BAA-1283 / AT1b</strain>
    </source>
</reference>